<proteinExistence type="inferred from homology"/>
<comment type="function">
    <text evidence="1">Sequence-specific endonuclease that cleaves unmethylated GATC sequences. It is involved in DNA mismatch repair.</text>
</comment>
<comment type="subcellular location">
    <subcellularLocation>
        <location evidence="1">Cytoplasm</location>
    </subcellularLocation>
</comment>
<comment type="similarity">
    <text evidence="1">Belongs to the MutH family.</text>
</comment>
<organism>
    <name type="scientific">Escherichia coli O8 (strain IAI1)</name>
    <dbReference type="NCBI Taxonomy" id="585034"/>
    <lineage>
        <taxon>Bacteria</taxon>
        <taxon>Pseudomonadati</taxon>
        <taxon>Pseudomonadota</taxon>
        <taxon>Gammaproteobacteria</taxon>
        <taxon>Enterobacterales</taxon>
        <taxon>Enterobacteriaceae</taxon>
        <taxon>Escherichia</taxon>
    </lineage>
</organism>
<reference key="1">
    <citation type="journal article" date="2009" name="PLoS Genet.">
        <title>Organised genome dynamics in the Escherichia coli species results in highly diverse adaptive paths.</title>
        <authorList>
            <person name="Touchon M."/>
            <person name="Hoede C."/>
            <person name="Tenaillon O."/>
            <person name="Barbe V."/>
            <person name="Baeriswyl S."/>
            <person name="Bidet P."/>
            <person name="Bingen E."/>
            <person name="Bonacorsi S."/>
            <person name="Bouchier C."/>
            <person name="Bouvet O."/>
            <person name="Calteau A."/>
            <person name="Chiapello H."/>
            <person name="Clermont O."/>
            <person name="Cruveiller S."/>
            <person name="Danchin A."/>
            <person name="Diard M."/>
            <person name="Dossat C."/>
            <person name="Karoui M.E."/>
            <person name="Frapy E."/>
            <person name="Garry L."/>
            <person name="Ghigo J.M."/>
            <person name="Gilles A.M."/>
            <person name="Johnson J."/>
            <person name="Le Bouguenec C."/>
            <person name="Lescat M."/>
            <person name="Mangenot S."/>
            <person name="Martinez-Jehanne V."/>
            <person name="Matic I."/>
            <person name="Nassif X."/>
            <person name="Oztas S."/>
            <person name="Petit M.A."/>
            <person name="Pichon C."/>
            <person name="Rouy Z."/>
            <person name="Ruf C.S."/>
            <person name="Schneider D."/>
            <person name="Tourret J."/>
            <person name="Vacherie B."/>
            <person name="Vallenet D."/>
            <person name="Medigue C."/>
            <person name="Rocha E.P.C."/>
            <person name="Denamur E."/>
        </authorList>
    </citation>
    <scope>NUCLEOTIDE SEQUENCE [LARGE SCALE GENOMIC DNA]</scope>
    <source>
        <strain>IAI1</strain>
    </source>
</reference>
<gene>
    <name evidence="1" type="primary">mutH</name>
    <name type="ordered locus">ECIAI1_2940</name>
</gene>
<sequence length="229" mass="25499">MSQPRPLLSPPETEEQLLAQAQQLSGYTLGELAALAGLVTPENLKRDKGWIGVLLEIWLGASAGSKPEQDFAALGVELKTIPVDSLGRPLETTFVCVAPLTGNSGVTWETSHVRHKLKRVLWIPVEGERSIPLAQRRVGSPLLWSPNEEEDRQLREDWEELMDMIVLGQVERITARHGEYLQIRPKAANAKALTEAIGARGERILTLPRGFYLKKNFTSALLARHFLIQ</sequence>
<dbReference type="EMBL" id="CU928160">
    <property type="protein sequence ID" value="CAQ99757.1"/>
    <property type="molecule type" value="Genomic_DNA"/>
</dbReference>
<dbReference type="RefSeq" id="WP_000082188.1">
    <property type="nucleotide sequence ID" value="NC_011741.1"/>
</dbReference>
<dbReference type="SMR" id="B7LY87"/>
<dbReference type="GeneID" id="93779167"/>
<dbReference type="KEGG" id="ecr:ECIAI1_2940"/>
<dbReference type="HOGENOM" id="CLU_086669_0_0_6"/>
<dbReference type="GO" id="GO:0005737">
    <property type="term" value="C:cytoplasm"/>
    <property type="evidence" value="ECO:0007669"/>
    <property type="project" value="UniProtKB-SubCell"/>
</dbReference>
<dbReference type="GO" id="GO:0003677">
    <property type="term" value="F:DNA binding"/>
    <property type="evidence" value="ECO:0007669"/>
    <property type="project" value="InterPro"/>
</dbReference>
<dbReference type="GO" id="GO:0004519">
    <property type="term" value="F:endonuclease activity"/>
    <property type="evidence" value="ECO:0007669"/>
    <property type="project" value="UniProtKB-UniRule"/>
</dbReference>
<dbReference type="GO" id="GO:0006304">
    <property type="term" value="P:DNA modification"/>
    <property type="evidence" value="ECO:0007669"/>
    <property type="project" value="InterPro"/>
</dbReference>
<dbReference type="GO" id="GO:0006298">
    <property type="term" value="P:mismatch repair"/>
    <property type="evidence" value="ECO:0007669"/>
    <property type="project" value="UniProtKB-UniRule"/>
</dbReference>
<dbReference type="CDD" id="cd00583">
    <property type="entry name" value="MutH-like"/>
    <property type="match status" value="1"/>
</dbReference>
<dbReference type="FunFam" id="3.40.600.10:FF:000001">
    <property type="entry name" value="DNA mismatch repair protein MutH"/>
    <property type="match status" value="1"/>
</dbReference>
<dbReference type="Gene3D" id="3.40.600.10">
    <property type="entry name" value="DNA mismatch repair MutH/Restriction endonuclease, type II"/>
    <property type="match status" value="1"/>
</dbReference>
<dbReference type="HAMAP" id="MF_00759">
    <property type="entry name" value="MutH"/>
    <property type="match status" value="1"/>
</dbReference>
<dbReference type="InterPro" id="IPR004230">
    <property type="entry name" value="DNA_mismatch_repair_MutH"/>
</dbReference>
<dbReference type="InterPro" id="IPR011337">
    <property type="entry name" value="DNA_rep_MutH/RE_typeII_Sau3AI"/>
</dbReference>
<dbReference type="InterPro" id="IPR037057">
    <property type="entry name" value="DNA_rep_MutH/T2_RE_sf"/>
</dbReference>
<dbReference type="InterPro" id="IPR011335">
    <property type="entry name" value="Restrct_endonuc-II-like"/>
</dbReference>
<dbReference type="NCBIfam" id="TIGR02248">
    <property type="entry name" value="mutH_TIGR"/>
    <property type="match status" value="1"/>
</dbReference>
<dbReference type="NCBIfam" id="NF003458">
    <property type="entry name" value="PRK05070.1"/>
    <property type="match status" value="1"/>
</dbReference>
<dbReference type="Pfam" id="PF02976">
    <property type="entry name" value="MutH"/>
    <property type="match status" value="1"/>
</dbReference>
<dbReference type="SMART" id="SM00927">
    <property type="entry name" value="MutH"/>
    <property type="match status" value="1"/>
</dbReference>
<dbReference type="SUPFAM" id="SSF52980">
    <property type="entry name" value="Restriction endonuclease-like"/>
    <property type="match status" value="1"/>
</dbReference>
<name>MUTH_ECO8A</name>
<protein>
    <recommendedName>
        <fullName evidence="1">DNA mismatch repair protein MutH</fullName>
    </recommendedName>
    <alternativeName>
        <fullName evidence="1">Methyl-directed mismatch repair protein</fullName>
    </alternativeName>
</protein>
<accession>B7LY87</accession>
<evidence type="ECO:0000255" key="1">
    <source>
        <dbReference type="HAMAP-Rule" id="MF_00759"/>
    </source>
</evidence>
<keyword id="KW-0963">Cytoplasm</keyword>
<keyword id="KW-0227">DNA damage</keyword>
<keyword id="KW-0234">DNA repair</keyword>
<keyword id="KW-0255">Endonuclease</keyword>
<keyword id="KW-0378">Hydrolase</keyword>
<keyword id="KW-0540">Nuclease</keyword>
<feature type="chain" id="PRO_1000133463" description="DNA mismatch repair protein MutH">
    <location>
        <begin position="1"/>
        <end position="229"/>
    </location>
</feature>